<dbReference type="EC" id="1.4.4.2" evidence="1"/>
<dbReference type="EMBL" id="CP001111">
    <property type="protein sequence ID" value="ACF52699.1"/>
    <property type="molecule type" value="Genomic_DNA"/>
</dbReference>
<dbReference type="RefSeq" id="WP_012511825.1">
    <property type="nucleotide sequence ID" value="NC_011071.1"/>
</dbReference>
<dbReference type="SMR" id="B4SS67"/>
<dbReference type="STRING" id="391008.Smal_3000"/>
<dbReference type="KEGG" id="smt:Smal_3000"/>
<dbReference type="eggNOG" id="COG0403">
    <property type="taxonomic scope" value="Bacteria"/>
</dbReference>
<dbReference type="eggNOG" id="COG1003">
    <property type="taxonomic scope" value="Bacteria"/>
</dbReference>
<dbReference type="HOGENOM" id="CLU_004620_3_2_6"/>
<dbReference type="OrthoDB" id="9801272at2"/>
<dbReference type="Proteomes" id="UP000001867">
    <property type="component" value="Chromosome"/>
</dbReference>
<dbReference type="GO" id="GO:0005829">
    <property type="term" value="C:cytosol"/>
    <property type="evidence" value="ECO:0007669"/>
    <property type="project" value="TreeGrafter"/>
</dbReference>
<dbReference type="GO" id="GO:0005960">
    <property type="term" value="C:glycine cleavage complex"/>
    <property type="evidence" value="ECO:0007669"/>
    <property type="project" value="TreeGrafter"/>
</dbReference>
<dbReference type="GO" id="GO:0016594">
    <property type="term" value="F:glycine binding"/>
    <property type="evidence" value="ECO:0007669"/>
    <property type="project" value="TreeGrafter"/>
</dbReference>
<dbReference type="GO" id="GO:0004375">
    <property type="term" value="F:glycine dehydrogenase (decarboxylating) activity"/>
    <property type="evidence" value="ECO:0007669"/>
    <property type="project" value="UniProtKB-EC"/>
</dbReference>
<dbReference type="GO" id="GO:0030170">
    <property type="term" value="F:pyridoxal phosphate binding"/>
    <property type="evidence" value="ECO:0007669"/>
    <property type="project" value="TreeGrafter"/>
</dbReference>
<dbReference type="GO" id="GO:0019464">
    <property type="term" value="P:glycine decarboxylation via glycine cleavage system"/>
    <property type="evidence" value="ECO:0007669"/>
    <property type="project" value="UniProtKB-UniRule"/>
</dbReference>
<dbReference type="CDD" id="cd00613">
    <property type="entry name" value="GDC-P"/>
    <property type="match status" value="2"/>
</dbReference>
<dbReference type="FunFam" id="3.40.640.10:FF:000005">
    <property type="entry name" value="Glycine dehydrogenase (decarboxylating), mitochondrial"/>
    <property type="match status" value="1"/>
</dbReference>
<dbReference type="FunFam" id="3.90.1150.10:FF:000007">
    <property type="entry name" value="Glycine dehydrogenase (decarboxylating), mitochondrial"/>
    <property type="match status" value="1"/>
</dbReference>
<dbReference type="FunFam" id="3.40.640.10:FF:000007">
    <property type="entry name" value="glycine dehydrogenase (Decarboxylating), mitochondrial"/>
    <property type="match status" value="1"/>
</dbReference>
<dbReference type="Gene3D" id="3.90.1150.10">
    <property type="entry name" value="Aspartate Aminotransferase, domain 1"/>
    <property type="match status" value="2"/>
</dbReference>
<dbReference type="Gene3D" id="3.40.640.10">
    <property type="entry name" value="Type I PLP-dependent aspartate aminotransferase-like (Major domain)"/>
    <property type="match status" value="2"/>
</dbReference>
<dbReference type="HAMAP" id="MF_00711">
    <property type="entry name" value="GcvP"/>
    <property type="match status" value="1"/>
</dbReference>
<dbReference type="InterPro" id="IPR003437">
    <property type="entry name" value="GcvP"/>
</dbReference>
<dbReference type="InterPro" id="IPR049316">
    <property type="entry name" value="GDC-P_C"/>
</dbReference>
<dbReference type="InterPro" id="IPR049315">
    <property type="entry name" value="GDC-P_N"/>
</dbReference>
<dbReference type="InterPro" id="IPR020581">
    <property type="entry name" value="GDC_P"/>
</dbReference>
<dbReference type="InterPro" id="IPR015424">
    <property type="entry name" value="PyrdxlP-dep_Trfase"/>
</dbReference>
<dbReference type="InterPro" id="IPR015421">
    <property type="entry name" value="PyrdxlP-dep_Trfase_major"/>
</dbReference>
<dbReference type="InterPro" id="IPR015422">
    <property type="entry name" value="PyrdxlP-dep_Trfase_small"/>
</dbReference>
<dbReference type="NCBIfam" id="TIGR00461">
    <property type="entry name" value="gcvP"/>
    <property type="match status" value="1"/>
</dbReference>
<dbReference type="NCBIfam" id="NF001696">
    <property type="entry name" value="PRK00451.1"/>
    <property type="match status" value="1"/>
</dbReference>
<dbReference type="NCBIfam" id="NF003346">
    <property type="entry name" value="PRK04366.1"/>
    <property type="match status" value="1"/>
</dbReference>
<dbReference type="PANTHER" id="PTHR11773:SF1">
    <property type="entry name" value="GLYCINE DEHYDROGENASE (DECARBOXYLATING), MITOCHONDRIAL"/>
    <property type="match status" value="1"/>
</dbReference>
<dbReference type="PANTHER" id="PTHR11773">
    <property type="entry name" value="GLYCINE DEHYDROGENASE, DECARBOXYLATING"/>
    <property type="match status" value="1"/>
</dbReference>
<dbReference type="Pfam" id="PF21478">
    <property type="entry name" value="GcvP2_C"/>
    <property type="match status" value="1"/>
</dbReference>
<dbReference type="Pfam" id="PF02347">
    <property type="entry name" value="GDC-P"/>
    <property type="match status" value="2"/>
</dbReference>
<dbReference type="SUPFAM" id="SSF53383">
    <property type="entry name" value="PLP-dependent transferases"/>
    <property type="match status" value="2"/>
</dbReference>
<protein>
    <recommendedName>
        <fullName evidence="1">Glycine dehydrogenase (decarboxylating)</fullName>
        <ecNumber evidence="1">1.4.4.2</ecNumber>
    </recommendedName>
    <alternativeName>
        <fullName evidence="1">Glycine cleavage system P-protein</fullName>
    </alternativeName>
    <alternativeName>
        <fullName evidence="1">Glycine decarboxylase</fullName>
    </alternativeName>
    <alternativeName>
        <fullName evidence="1">Glycine dehydrogenase (aminomethyl-transferring)</fullName>
    </alternativeName>
</protein>
<sequence>MSQNTPSLRELEHHSAFVERHIGPNDAEIAQMLGVIGHASLDAMTDAIVPAKIKSPAPLALPESITEVQALAKIRAIADKNTVLRSFIGQGYYGTHTPNVILRNILENPAWYTAYTPYQAEISQGRMEALINFQTLCADLTGMEIANASLLDEATAAAEAMTLAKRSAKSKSDTFFVHDAVHPQTLELLRTRAEPMGIVLRVGTPAEALEADSFGLLLQYPDTFGQVGDYKALVDAVHARGGLVAVATDLLALTLLAAPGEWGADIVVGNSQRFGVPFGFGGPHAAFMACRDAYKRSMPGRLIGVSIDAQGNPAYRLTLQTREQHIRREKATSNICTAQVLLAVMASMYAVYHGPEGLTRIARRTHRLASILAAALRKAGVQVGGDFFDTLHVTGVHAEEIHAKARAAGYNLRAIDSDSVGISLDETTTRADIVAVASVFGASLDVDALDASTADALPAGLLRQSEFLTHPVFNTHHSEHELLRYLRSLADKDLAMDRTMIPLGSCTMKLNATAEMIPVTWPEFSQIHPLVPADQALGYKELIDSLEAMLVECTGYDAVSLQPNSGAQGEYAGLLAIRAYHRSRGEDHRDICLIPDSAHGTNPASAQMCGMKVVVTKTDANGNVDVEDIRLNAEKYSDRLAAIMMTYPSTHGVFEEEVVEICEIIHKHGGQVYTDGANMNALVGVAKPGKWGSDVSHLNLHKTFCIPHGGGGPGVGPCAVKEHLAPFLPGKLGDHGPVGMVSAASFGSASILPISWMYIAMMGTEGLRKATQVAQLNANYIAKRLAPHFKTLYTGRNGLVAHECILDVRPLEKTSGIGAEDVAKRLIDFGFHAPTLSFPVAGTLMVEPTESESLHELDRFIDAMIQIREEITAIEDGRLDREDNPLKNAPHTATAVTASEWTHAYPRELAAFPLPSLKLQKYWPPVARVDNVYGDKNVMCACIPVDAYKDDEVEA</sequence>
<reference key="1">
    <citation type="submission" date="2008-06" db="EMBL/GenBank/DDBJ databases">
        <title>Complete sequence of Stenotrophomonas maltophilia R551-3.</title>
        <authorList>
            <consortium name="US DOE Joint Genome Institute"/>
            <person name="Lucas S."/>
            <person name="Copeland A."/>
            <person name="Lapidus A."/>
            <person name="Glavina del Rio T."/>
            <person name="Dalin E."/>
            <person name="Tice H."/>
            <person name="Pitluck S."/>
            <person name="Chain P."/>
            <person name="Malfatti S."/>
            <person name="Shin M."/>
            <person name="Vergez L."/>
            <person name="Lang D."/>
            <person name="Schmutz J."/>
            <person name="Larimer F."/>
            <person name="Land M."/>
            <person name="Hauser L."/>
            <person name="Kyrpides N."/>
            <person name="Mikhailova N."/>
            <person name="Taghavi S."/>
            <person name="Monchy S."/>
            <person name="Newman L."/>
            <person name="Vangronsveld J."/>
            <person name="van der Lelie D."/>
            <person name="Richardson P."/>
        </authorList>
    </citation>
    <scope>NUCLEOTIDE SEQUENCE [LARGE SCALE GENOMIC DNA]</scope>
    <source>
        <strain>R551-3</strain>
    </source>
</reference>
<keyword id="KW-0560">Oxidoreductase</keyword>
<keyword id="KW-0663">Pyridoxal phosphate</keyword>
<accession>B4SS67</accession>
<proteinExistence type="inferred from homology"/>
<gene>
    <name evidence="1" type="primary">gcvP</name>
    <name type="ordered locus">Smal_3000</name>
</gene>
<evidence type="ECO:0000255" key="1">
    <source>
        <dbReference type="HAMAP-Rule" id="MF_00711"/>
    </source>
</evidence>
<organism>
    <name type="scientific">Stenotrophomonas maltophilia (strain R551-3)</name>
    <dbReference type="NCBI Taxonomy" id="391008"/>
    <lineage>
        <taxon>Bacteria</taxon>
        <taxon>Pseudomonadati</taxon>
        <taxon>Pseudomonadota</taxon>
        <taxon>Gammaproteobacteria</taxon>
        <taxon>Lysobacterales</taxon>
        <taxon>Lysobacteraceae</taxon>
        <taxon>Stenotrophomonas</taxon>
        <taxon>Stenotrophomonas maltophilia group</taxon>
    </lineage>
</organism>
<comment type="function">
    <text evidence="1">The glycine cleavage system catalyzes the degradation of glycine. The P protein binds the alpha-amino group of glycine through its pyridoxal phosphate cofactor; CO(2) is released and the remaining methylamine moiety is then transferred to the lipoamide cofactor of the H protein.</text>
</comment>
<comment type="catalytic activity">
    <reaction evidence="1">
        <text>N(6)-[(R)-lipoyl]-L-lysyl-[glycine-cleavage complex H protein] + glycine + H(+) = N(6)-[(R)-S(8)-aminomethyldihydrolipoyl]-L-lysyl-[glycine-cleavage complex H protein] + CO2</text>
        <dbReference type="Rhea" id="RHEA:24304"/>
        <dbReference type="Rhea" id="RHEA-COMP:10494"/>
        <dbReference type="Rhea" id="RHEA-COMP:10495"/>
        <dbReference type="ChEBI" id="CHEBI:15378"/>
        <dbReference type="ChEBI" id="CHEBI:16526"/>
        <dbReference type="ChEBI" id="CHEBI:57305"/>
        <dbReference type="ChEBI" id="CHEBI:83099"/>
        <dbReference type="ChEBI" id="CHEBI:83143"/>
        <dbReference type="EC" id="1.4.4.2"/>
    </reaction>
</comment>
<comment type="cofactor">
    <cofactor evidence="1">
        <name>pyridoxal 5'-phosphate</name>
        <dbReference type="ChEBI" id="CHEBI:597326"/>
    </cofactor>
</comment>
<comment type="subunit">
    <text evidence="1">The glycine cleavage system is composed of four proteins: P, T, L and H.</text>
</comment>
<comment type="similarity">
    <text evidence="1">Belongs to the GcvP family.</text>
</comment>
<feature type="chain" id="PRO_1000132459" description="Glycine dehydrogenase (decarboxylating)">
    <location>
        <begin position="1"/>
        <end position="955"/>
    </location>
</feature>
<feature type="modified residue" description="N6-(pyridoxal phosphate)lysine" evidence="1">
    <location>
        <position position="702"/>
    </location>
</feature>
<name>GCSP_STRM5</name>